<name>P53_RAT</name>
<dbReference type="EMBL" id="X13058">
    <property type="protein sequence ID" value="CAA31457.1"/>
    <property type="molecule type" value="mRNA"/>
</dbReference>
<dbReference type="EMBL" id="L07910">
    <property type="protein sequence ID" value="AAA41788.1"/>
    <property type="molecule type" value="Genomic_DNA"/>
</dbReference>
<dbReference type="EMBL" id="L07904">
    <property type="protein sequence ID" value="AAA41788.1"/>
    <property type="status" value="JOINED"/>
    <property type="molecule type" value="Genomic_DNA"/>
</dbReference>
<dbReference type="EMBL" id="L07905">
    <property type="protein sequence ID" value="AAA41788.1"/>
    <property type="status" value="JOINED"/>
    <property type="molecule type" value="Genomic_DNA"/>
</dbReference>
<dbReference type="EMBL" id="L07906">
    <property type="protein sequence ID" value="AAA41788.1"/>
    <property type="status" value="JOINED"/>
    <property type="molecule type" value="Genomic_DNA"/>
</dbReference>
<dbReference type="EMBL" id="L07907">
    <property type="protein sequence ID" value="AAA41788.1"/>
    <property type="status" value="JOINED"/>
    <property type="molecule type" value="Genomic_DNA"/>
</dbReference>
<dbReference type="EMBL" id="L07908">
    <property type="protein sequence ID" value="AAA41788.1"/>
    <property type="status" value="JOINED"/>
    <property type="molecule type" value="Genomic_DNA"/>
</dbReference>
<dbReference type="EMBL" id="L07909">
    <property type="protein sequence ID" value="AAA41788.1"/>
    <property type="status" value="JOINED"/>
    <property type="molecule type" value="Genomic_DNA"/>
</dbReference>
<dbReference type="EMBL" id="U90328">
    <property type="protein sequence ID" value="AAB80959.1"/>
    <property type="molecule type" value="mRNA"/>
</dbReference>
<dbReference type="EMBL" id="BC081788">
    <property type="protein sequence ID" value="AAH81788.2"/>
    <property type="molecule type" value="mRNA"/>
</dbReference>
<dbReference type="EMBL" id="BC098663">
    <property type="protein sequence ID" value="AAH98663.1"/>
    <property type="molecule type" value="mRNA"/>
</dbReference>
<dbReference type="PIR" id="S02192">
    <property type="entry name" value="S02192"/>
</dbReference>
<dbReference type="RefSeq" id="NP_001416922.1">
    <property type="nucleotide sequence ID" value="NM_001429993.1"/>
</dbReference>
<dbReference type="RefSeq" id="NP_001416923.1">
    <property type="nucleotide sequence ID" value="NM_001429994.1"/>
</dbReference>
<dbReference type="RefSeq" id="NP_112251.2">
    <property type="nucleotide sequence ID" value="NM_030989.4"/>
</dbReference>
<dbReference type="RefSeq" id="XP_006246656.1">
    <property type="nucleotide sequence ID" value="XM_006246594.3"/>
</dbReference>
<dbReference type="RefSeq" id="XP_006246657.1">
    <property type="nucleotide sequence ID" value="XM_006246595.3"/>
</dbReference>
<dbReference type="SMR" id="P10361"/>
<dbReference type="BioGRID" id="246960">
    <property type="interactions" value="12"/>
</dbReference>
<dbReference type="DIP" id="DIP-46016N"/>
<dbReference type="FunCoup" id="P10361">
    <property type="interactions" value="2883"/>
</dbReference>
<dbReference type="IntAct" id="P10361">
    <property type="interactions" value="5"/>
</dbReference>
<dbReference type="MINT" id="P10361"/>
<dbReference type="STRING" id="10116.ENSRNOP00000074031"/>
<dbReference type="GlyGen" id="P10361">
    <property type="glycosylation" value="1 site"/>
</dbReference>
<dbReference type="iPTMnet" id="P10361"/>
<dbReference type="PhosphoSitePlus" id="P10361"/>
<dbReference type="PaxDb" id="10116-ENSRNOP00000047840"/>
<dbReference type="Ensembl" id="ENSRNOT00000046490.4">
    <property type="protein sequence ID" value="ENSRNOP00000047840.2"/>
    <property type="gene ID" value="ENSRNOG00000010756.8"/>
</dbReference>
<dbReference type="GeneID" id="24842"/>
<dbReference type="KEGG" id="rno:24842"/>
<dbReference type="UCSC" id="RGD:3889">
    <property type="organism name" value="rat"/>
</dbReference>
<dbReference type="AGR" id="RGD:3889"/>
<dbReference type="CTD" id="7157"/>
<dbReference type="RGD" id="3889">
    <property type="gene designation" value="Tp53"/>
</dbReference>
<dbReference type="eggNOG" id="ENOG502QVY3">
    <property type="taxonomic scope" value="Eukaryota"/>
</dbReference>
<dbReference type="GeneTree" id="ENSGT00950000183153"/>
<dbReference type="HOGENOM" id="CLU_019621_0_0_1"/>
<dbReference type="InParanoid" id="P10361"/>
<dbReference type="OMA" id="HKKGEPC"/>
<dbReference type="OrthoDB" id="62159at9989"/>
<dbReference type="PhylomeDB" id="P10361"/>
<dbReference type="TreeFam" id="TF106101"/>
<dbReference type="Reactome" id="R-RNO-2559580">
    <property type="pathway name" value="Oxidative Stress Induced Senescence"/>
</dbReference>
<dbReference type="Reactome" id="R-RNO-2559585">
    <property type="pathway name" value="Oncogene Induced Senescence"/>
</dbReference>
<dbReference type="Reactome" id="R-RNO-2559586">
    <property type="pathway name" value="DNA Damage/Telomere Stress Induced Senescence"/>
</dbReference>
<dbReference type="Reactome" id="R-RNO-349425">
    <property type="pathway name" value="Autodegradation of the E3 ubiquitin ligase COP1"/>
</dbReference>
<dbReference type="Reactome" id="R-RNO-5689880">
    <property type="pathway name" value="Ub-specific processing proteases"/>
</dbReference>
<dbReference type="Reactome" id="R-RNO-5689896">
    <property type="pathway name" value="Ovarian tumor domain proteases"/>
</dbReference>
<dbReference type="Reactome" id="R-RNO-5693565">
    <property type="pathway name" value="Recruitment and ATM-mediated phosphorylation of repair and signaling proteins at DNA double strand breaks"/>
</dbReference>
<dbReference type="Reactome" id="R-RNO-6804754">
    <property type="pathway name" value="Regulation of TP53 Expression"/>
</dbReference>
<dbReference type="Reactome" id="R-RNO-6804756">
    <property type="pathway name" value="Regulation of TP53 Activity through Phosphorylation"/>
</dbReference>
<dbReference type="Reactome" id="R-RNO-6804757">
    <property type="pathway name" value="Regulation of TP53 Degradation"/>
</dbReference>
<dbReference type="Reactome" id="R-RNO-6804758">
    <property type="pathway name" value="Regulation of TP53 Activity through Acetylation"/>
</dbReference>
<dbReference type="Reactome" id="R-RNO-6804759">
    <property type="pathway name" value="Regulation of TP53 Activity through Association with Co-factors"/>
</dbReference>
<dbReference type="Reactome" id="R-RNO-6804760">
    <property type="pathway name" value="Regulation of TP53 Activity through Methylation"/>
</dbReference>
<dbReference type="Reactome" id="R-RNO-6811555">
    <property type="pathway name" value="PI5P Regulates TP53 Acetylation"/>
</dbReference>
<dbReference type="Reactome" id="R-RNO-69473">
    <property type="pathway name" value="G2/M DNA damage checkpoint"/>
</dbReference>
<dbReference type="Reactome" id="R-RNO-69481">
    <property type="pathway name" value="G2/M Checkpoints"/>
</dbReference>
<dbReference type="Reactome" id="R-RNO-69541">
    <property type="pathway name" value="Stabilization of p53"/>
</dbReference>
<dbReference type="Reactome" id="R-RNO-69895">
    <property type="pathway name" value="Transcriptional activation of cell cycle inhibitor p21"/>
</dbReference>
<dbReference type="Reactome" id="R-RNO-8852276">
    <property type="pathway name" value="The role of GTSE1 in G2/M progression after G2 checkpoint"/>
</dbReference>
<dbReference type="Reactome" id="R-RNO-8941855">
    <property type="pathway name" value="RUNX3 regulates CDKN1A transcription"/>
</dbReference>
<dbReference type="Reactome" id="R-RNO-9833482">
    <property type="pathway name" value="PKR-mediated signaling"/>
</dbReference>
<dbReference type="PRO" id="PR:P10361"/>
<dbReference type="Proteomes" id="UP000002494">
    <property type="component" value="Chromosome 10"/>
</dbReference>
<dbReference type="Bgee" id="ENSRNOG00000010756">
    <property type="expression patterns" value="Expressed in thymus and 20 other cell types or tissues"/>
</dbReference>
<dbReference type="ExpressionAtlas" id="P10361">
    <property type="expression patterns" value="baseline and differential"/>
</dbReference>
<dbReference type="GO" id="GO:0005813">
    <property type="term" value="C:centrosome"/>
    <property type="evidence" value="ECO:0000250"/>
    <property type="project" value="UniProtKB"/>
</dbReference>
<dbReference type="GO" id="GO:0000785">
    <property type="term" value="C:chromatin"/>
    <property type="evidence" value="ECO:0000314"/>
    <property type="project" value="RGD"/>
</dbReference>
<dbReference type="GO" id="GO:0005737">
    <property type="term" value="C:cytoplasm"/>
    <property type="evidence" value="ECO:0000250"/>
    <property type="project" value="UniProtKB"/>
</dbReference>
<dbReference type="GO" id="GO:0005829">
    <property type="term" value="C:cytosol"/>
    <property type="evidence" value="ECO:0000266"/>
    <property type="project" value="RGD"/>
</dbReference>
<dbReference type="GO" id="GO:0005783">
    <property type="term" value="C:endoplasmic reticulum"/>
    <property type="evidence" value="ECO:0007669"/>
    <property type="project" value="UniProtKB-SubCell"/>
</dbReference>
<dbReference type="GO" id="GO:0043073">
    <property type="term" value="C:germ cell nucleus"/>
    <property type="evidence" value="ECO:0000266"/>
    <property type="project" value="RGD"/>
</dbReference>
<dbReference type="GO" id="GO:0005759">
    <property type="term" value="C:mitochondrial matrix"/>
    <property type="evidence" value="ECO:0000266"/>
    <property type="project" value="RGD"/>
</dbReference>
<dbReference type="GO" id="GO:0005739">
    <property type="term" value="C:mitochondrion"/>
    <property type="evidence" value="ECO:0000250"/>
    <property type="project" value="UniProtKB"/>
</dbReference>
<dbReference type="GO" id="GO:0016604">
    <property type="term" value="C:nuclear body"/>
    <property type="evidence" value="ECO:0000266"/>
    <property type="project" value="RGD"/>
</dbReference>
<dbReference type="GO" id="GO:0016363">
    <property type="term" value="C:nuclear matrix"/>
    <property type="evidence" value="ECO:0000266"/>
    <property type="project" value="RGD"/>
</dbReference>
<dbReference type="GO" id="GO:0005730">
    <property type="term" value="C:nucleolus"/>
    <property type="evidence" value="ECO:0000250"/>
    <property type="project" value="UniProtKB"/>
</dbReference>
<dbReference type="GO" id="GO:0005654">
    <property type="term" value="C:nucleoplasm"/>
    <property type="evidence" value="ECO:0000266"/>
    <property type="project" value="RGD"/>
</dbReference>
<dbReference type="GO" id="GO:0005634">
    <property type="term" value="C:nucleus"/>
    <property type="evidence" value="ECO:0000314"/>
    <property type="project" value="MGI"/>
</dbReference>
<dbReference type="GO" id="GO:0016605">
    <property type="term" value="C:PML body"/>
    <property type="evidence" value="ECO:0000314"/>
    <property type="project" value="RGD"/>
</dbReference>
<dbReference type="GO" id="GO:0032991">
    <property type="term" value="C:protein-containing complex"/>
    <property type="evidence" value="ECO:0000266"/>
    <property type="project" value="RGD"/>
</dbReference>
<dbReference type="GO" id="GO:0005657">
    <property type="term" value="C:replication fork"/>
    <property type="evidence" value="ECO:0000266"/>
    <property type="project" value="RGD"/>
</dbReference>
<dbReference type="GO" id="GO:0090575">
    <property type="term" value="C:RNA polymerase II transcription regulator complex"/>
    <property type="evidence" value="ECO:0000314"/>
    <property type="project" value="ARUK-UCL"/>
</dbReference>
<dbReference type="GO" id="GO:0035861">
    <property type="term" value="C:site of double-strand break"/>
    <property type="evidence" value="ECO:0000266"/>
    <property type="project" value="RGD"/>
</dbReference>
<dbReference type="GO" id="GO:0005667">
    <property type="term" value="C:transcription regulator complex"/>
    <property type="evidence" value="ECO:0000314"/>
    <property type="project" value="RGD"/>
</dbReference>
<dbReference type="GO" id="GO:0017053">
    <property type="term" value="C:transcription repressor complex"/>
    <property type="evidence" value="ECO:0000266"/>
    <property type="project" value="RGD"/>
</dbReference>
<dbReference type="GO" id="GO:0071889">
    <property type="term" value="F:14-3-3 protein binding"/>
    <property type="evidence" value="ECO:0000266"/>
    <property type="project" value="RGD"/>
</dbReference>
<dbReference type="GO" id="GO:0036310">
    <property type="term" value="F:ATP-dependent DNA/DNA annealing activity"/>
    <property type="evidence" value="ECO:0000250"/>
    <property type="project" value="UniProtKB"/>
</dbReference>
<dbReference type="GO" id="GO:0003682">
    <property type="term" value="F:chromatin binding"/>
    <property type="evidence" value="ECO:0000266"/>
    <property type="project" value="RGD"/>
</dbReference>
<dbReference type="GO" id="GO:0000987">
    <property type="term" value="F:cis-regulatory region sequence-specific DNA binding"/>
    <property type="evidence" value="ECO:0000266"/>
    <property type="project" value="RGD"/>
</dbReference>
<dbReference type="GO" id="GO:0005507">
    <property type="term" value="F:copper ion binding"/>
    <property type="evidence" value="ECO:0000250"/>
    <property type="project" value="UniProtKB"/>
</dbReference>
<dbReference type="GO" id="GO:0001046">
    <property type="term" value="F:core promoter sequence-specific DNA binding"/>
    <property type="evidence" value="ECO:0000266"/>
    <property type="project" value="RGD"/>
</dbReference>
<dbReference type="GO" id="GO:0097718">
    <property type="term" value="F:disordered domain specific binding"/>
    <property type="evidence" value="ECO:0000266"/>
    <property type="project" value="RGD"/>
</dbReference>
<dbReference type="GO" id="GO:0003677">
    <property type="term" value="F:DNA binding"/>
    <property type="evidence" value="ECO:0000250"/>
    <property type="project" value="UniProtKB"/>
</dbReference>
<dbReference type="GO" id="GO:0001228">
    <property type="term" value="F:DNA-binding transcription activator activity, RNA polymerase II-specific"/>
    <property type="evidence" value="ECO:0000266"/>
    <property type="project" value="RGD"/>
</dbReference>
<dbReference type="GO" id="GO:0003700">
    <property type="term" value="F:DNA-binding transcription factor activity"/>
    <property type="evidence" value="ECO:0000266"/>
    <property type="project" value="RGD"/>
</dbReference>
<dbReference type="GO" id="GO:0000981">
    <property type="term" value="F:DNA-binding transcription factor activity, RNA polymerase II-specific"/>
    <property type="evidence" value="ECO:0000250"/>
    <property type="project" value="UniProtKB"/>
</dbReference>
<dbReference type="GO" id="GO:0001227">
    <property type="term" value="F:DNA-binding transcription repressor activity, RNA polymerase II-specific"/>
    <property type="evidence" value="ECO:0000266"/>
    <property type="project" value="RGD"/>
</dbReference>
<dbReference type="GO" id="GO:0019899">
    <property type="term" value="F:enzyme binding"/>
    <property type="evidence" value="ECO:0000266"/>
    <property type="project" value="RGD"/>
</dbReference>
<dbReference type="GO" id="GO:0140296">
    <property type="term" value="F:general transcription initiation factor binding"/>
    <property type="evidence" value="ECO:0000266"/>
    <property type="project" value="RGD"/>
</dbReference>
<dbReference type="GO" id="GO:0042826">
    <property type="term" value="F:histone deacetylase binding"/>
    <property type="evidence" value="ECO:0000266"/>
    <property type="project" value="RGD"/>
</dbReference>
<dbReference type="GO" id="GO:0035033">
    <property type="term" value="F:histone deacetylase regulator activity"/>
    <property type="evidence" value="ECO:0000266"/>
    <property type="project" value="RGD"/>
</dbReference>
<dbReference type="GO" id="GO:0042802">
    <property type="term" value="F:identical protein binding"/>
    <property type="evidence" value="ECO:0000266"/>
    <property type="project" value="RGD"/>
</dbReference>
<dbReference type="GO" id="GO:0097371">
    <property type="term" value="F:MDM2/MDM4 family protein binding"/>
    <property type="evidence" value="ECO:0000353"/>
    <property type="project" value="RGD"/>
</dbReference>
<dbReference type="GO" id="GO:0140693">
    <property type="term" value="F:molecular condensate scaffold activity"/>
    <property type="evidence" value="ECO:0000250"/>
    <property type="project" value="UniProtKB"/>
</dbReference>
<dbReference type="GO" id="GO:0140677">
    <property type="term" value="F:molecular function activator activity"/>
    <property type="evidence" value="ECO:0000266"/>
    <property type="project" value="RGD"/>
</dbReference>
<dbReference type="GO" id="GO:0003730">
    <property type="term" value="F:mRNA 3'-UTR binding"/>
    <property type="evidence" value="ECO:0000266"/>
    <property type="project" value="RGD"/>
</dbReference>
<dbReference type="GO" id="GO:0002039">
    <property type="term" value="F:p53 binding"/>
    <property type="evidence" value="ECO:0000266"/>
    <property type="project" value="RGD"/>
</dbReference>
<dbReference type="GO" id="GO:1990841">
    <property type="term" value="F:promoter-specific chromatin binding"/>
    <property type="evidence" value="ECO:0000250"/>
    <property type="project" value="UniProtKB"/>
</dbReference>
<dbReference type="GO" id="GO:0002020">
    <property type="term" value="F:protease binding"/>
    <property type="evidence" value="ECO:0000266"/>
    <property type="project" value="RGD"/>
</dbReference>
<dbReference type="GO" id="GO:0046982">
    <property type="term" value="F:protein heterodimerization activity"/>
    <property type="evidence" value="ECO:0000266"/>
    <property type="project" value="RGD"/>
</dbReference>
<dbReference type="GO" id="GO:0051721">
    <property type="term" value="F:protein phosphatase 2A binding"/>
    <property type="evidence" value="ECO:0000266"/>
    <property type="project" value="RGD"/>
</dbReference>
<dbReference type="GO" id="GO:0051087">
    <property type="term" value="F:protein-folding chaperone binding"/>
    <property type="evidence" value="ECO:0000266"/>
    <property type="project" value="RGD"/>
</dbReference>
<dbReference type="GO" id="GO:0030971">
    <property type="term" value="F:receptor tyrosine kinase binding"/>
    <property type="evidence" value="ECO:0000266"/>
    <property type="project" value="RGD"/>
</dbReference>
<dbReference type="GO" id="GO:0000978">
    <property type="term" value="F:RNA polymerase II cis-regulatory region sequence-specific DNA binding"/>
    <property type="evidence" value="ECO:0000250"/>
    <property type="project" value="UniProtKB"/>
</dbReference>
<dbReference type="GO" id="GO:0000977">
    <property type="term" value="F:RNA polymerase II transcription regulatory region sequence-specific DNA binding"/>
    <property type="evidence" value="ECO:0000266"/>
    <property type="project" value="RGD"/>
</dbReference>
<dbReference type="GO" id="GO:0061629">
    <property type="term" value="F:RNA polymerase II-specific DNA-binding transcription factor binding"/>
    <property type="evidence" value="ECO:0000353"/>
    <property type="project" value="ARUK-UCL"/>
</dbReference>
<dbReference type="GO" id="GO:0043565">
    <property type="term" value="F:sequence-specific DNA binding"/>
    <property type="evidence" value="ECO:0000314"/>
    <property type="project" value="RGD"/>
</dbReference>
<dbReference type="GO" id="GO:0001094">
    <property type="term" value="F:TFIID-class transcription factor complex binding"/>
    <property type="evidence" value="ECO:0000266"/>
    <property type="project" value="RGD"/>
</dbReference>
<dbReference type="GO" id="GO:0000976">
    <property type="term" value="F:transcription cis-regulatory region binding"/>
    <property type="evidence" value="ECO:0000266"/>
    <property type="project" value="RGD"/>
</dbReference>
<dbReference type="GO" id="GO:0001221">
    <property type="term" value="F:transcription coregulator binding"/>
    <property type="evidence" value="ECO:0000353"/>
    <property type="project" value="RGD"/>
</dbReference>
<dbReference type="GO" id="GO:0044325">
    <property type="term" value="F:transmembrane transporter binding"/>
    <property type="evidence" value="ECO:0000353"/>
    <property type="project" value="RGD"/>
</dbReference>
<dbReference type="GO" id="GO:0031625">
    <property type="term" value="F:ubiquitin protein ligase binding"/>
    <property type="evidence" value="ECO:0000353"/>
    <property type="project" value="RGD"/>
</dbReference>
<dbReference type="GO" id="GO:0006915">
    <property type="term" value="P:apoptotic process"/>
    <property type="evidence" value="ECO:0000266"/>
    <property type="project" value="RGD"/>
</dbReference>
<dbReference type="GO" id="GO:0097190">
    <property type="term" value="P:apoptotic signaling pathway"/>
    <property type="evidence" value="ECO:0000315"/>
    <property type="project" value="UniProtKB"/>
</dbReference>
<dbReference type="GO" id="GO:0006914">
    <property type="term" value="P:autophagy"/>
    <property type="evidence" value="ECO:0000266"/>
    <property type="project" value="RGD"/>
</dbReference>
<dbReference type="GO" id="GO:0002326">
    <property type="term" value="P:B cell lineage commitment"/>
    <property type="evidence" value="ECO:0000266"/>
    <property type="project" value="RGD"/>
</dbReference>
<dbReference type="GO" id="GO:0048539">
    <property type="term" value="P:bone marrow development"/>
    <property type="evidence" value="ECO:0000266"/>
    <property type="project" value="RGD"/>
</dbReference>
<dbReference type="GO" id="GO:0010659">
    <property type="term" value="P:cardiac muscle cell apoptotic process"/>
    <property type="evidence" value="ECO:0000266"/>
    <property type="project" value="RGD"/>
</dbReference>
<dbReference type="GO" id="GO:0060411">
    <property type="term" value="P:cardiac septum morphogenesis"/>
    <property type="evidence" value="ECO:0000266"/>
    <property type="project" value="RGD"/>
</dbReference>
<dbReference type="GO" id="GO:0008283">
    <property type="term" value="P:cell population proliferation"/>
    <property type="evidence" value="ECO:0000266"/>
    <property type="project" value="RGD"/>
</dbReference>
<dbReference type="GO" id="GO:0072717">
    <property type="term" value="P:cellular response to actinomycin D"/>
    <property type="evidence" value="ECO:0000266"/>
    <property type="project" value="RGD"/>
</dbReference>
<dbReference type="GO" id="GO:0071480">
    <property type="term" value="P:cellular response to gamma radiation"/>
    <property type="evidence" value="ECO:0000266"/>
    <property type="project" value="RGD"/>
</dbReference>
<dbReference type="GO" id="GO:0042149">
    <property type="term" value="P:cellular response to glucose starvation"/>
    <property type="evidence" value="ECO:0000266"/>
    <property type="project" value="RGD"/>
</dbReference>
<dbReference type="GO" id="GO:0034605">
    <property type="term" value="P:cellular response to heat"/>
    <property type="evidence" value="ECO:0000270"/>
    <property type="project" value="RGD"/>
</dbReference>
<dbReference type="GO" id="GO:0071456">
    <property type="term" value="P:cellular response to hypoxia"/>
    <property type="evidence" value="ECO:0000270"/>
    <property type="project" value="RGD"/>
</dbReference>
<dbReference type="GO" id="GO:0071479">
    <property type="term" value="P:cellular response to ionizing radiation"/>
    <property type="evidence" value="ECO:0000266"/>
    <property type="project" value="RGD"/>
</dbReference>
<dbReference type="GO" id="GO:1904584">
    <property type="term" value="P:cellular response to polyamine macromolecule"/>
    <property type="evidence" value="ECO:0000270"/>
    <property type="project" value="RGD"/>
</dbReference>
<dbReference type="GO" id="GO:0034614">
    <property type="term" value="P:cellular response to reactive oxygen species"/>
    <property type="evidence" value="ECO:0000315"/>
    <property type="project" value="RGD"/>
</dbReference>
<dbReference type="GO" id="GO:0033554">
    <property type="term" value="P:cellular response to stress"/>
    <property type="evidence" value="ECO:0000266"/>
    <property type="project" value="RGD"/>
</dbReference>
<dbReference type="GO" id="GO:0071401">
    <property type="term" value="P:cellular response to triglyceride"/>
    <property type="evidence" value="ECO:0000270"/>
    <property type="project" value="RGD"/>
</dbReference>
<dbReference type="GO" id="GO:0034644">
    <property type="term" value="P:cellular response to UV"/>
    <property type="evidence" value="ECO:0000266"/>
    <property type="project" value="RGD"/>
</dbReference>
<dbReference type="GO" id="GO:0071494">
    <property type="term" value="P:cellular response to UV-C"/>
    <property type="evidence" value="ECO:0000266"/>
    <property type="project" value="RGD"/>
</dbReference>
<dbReference type="GO" id="GO:0071466">
    <property type="term" value="P:cellular response to xenobiotic stimulus"/>
    <property type="evidence" value="ECO:0000266"/>
    <property type="project" value="RGD"/>
</dbReference>
<dbReference type="GO" id="GO:0090398">
    <property type="term" value="P:cellular senescence"/>
    <property type="evidence" value="ECO:0000250"/>
    <property type="project" value="UniProtKB"/>
</dbReference>
<dbReference type="GO" id="GO:0007417">
    <property type="term" value="P:central nervous system development"/>
    <property type="evidence" value="ECO:0000266"/>
    <property type="project" value="RGD"/>
</dbReference>
<dbReference type="GO" id="GO:0021549">
    <property type="term" value="P:cerebellum development"/>
    <property type="evidence" value="ECO:0000266"/>
    <property type="project" value="RGD"/>
</dbReference>
<dbReference type="GO" id="GO:0051276">
    <property type="term" value="P:chromosome organization"/>
    <property type="evidence" value="ECO:0000266"/>
    <property type="project" value="RGD"/>
</dbReference>
<dbReference type="GO" id="GO:0048512">
    <property type="term" value="P:circadian behavior"/>
    <property type="evidence" value="ECO:0000250"/>
    <property type="project" value="UniProtKB"/>
</dbReference>
<dbReference type="GO" id="GO:0007623">
    <property type="term" value="P:circadian rhythm"/>
    <property type="evidence" value="ECO:0000266"/>
    <property type="project" value="RGD"/>
</dbReference>
<dbReference type="GO" id="GO:0008340">
    <property type="term" value="P:determination of adult lifespan"/>
    <property type="evidence" value="ECO:0000266"/>
    <property type="project" value="RGD"/>
</dbReference>
<dbReference type="GO" id="GO:0006974">
    <property type="term" value="P:DNA damage response"/>
    <property type="evidence" value="ECO:0000250"/>
    <property type="project" value="UniProtKB"/>
</dbReference>
<dbReference type="GO" id="GO:0030330">
    <property type="term" value="P:DNA damage response, signal transduction by p53 class mediator"/>
    <property type="evidence" value="ECO:0000266"/>
    <property type="project" value="RGD"/>
</dbReference>
<dbReference type="GO" id="GO:0006302">
    <property type="term" value="P:double-strand break repair"/>
    <property type="evidence" value="ECO:0000266"/>
    <property type="project" value="RGD"/>
</dbReference>
<dbReference type="GO" id="GO:0009792">
    <property type="term" value="P:embryo development ending in birth or egg hatching"/>
    <property type="evidence" value="ECO:0000266"/>
    <property type="project" value="RGD"/>
</dbReference>
<dbReference type="GO" id="GO:0048568">
    <property type="term" value="P:embryonic organ development"/>
    <property type="evidence" value="ECO:0000266"/>
    <property type="project" value="RGD"/>
</dbReference>
<dbReference type="GO" id="GO:0043153">
    <property type="term" value="P:entrainment of circadian clock by photoperiod"/>
    <property type="evidence" value="ECO:0000250"/>
    <property type="project" value="UniProtKB"/>
</dbReference>
<dbReference type="GO" id="GO:0006983">
    <property type="term" value="P:ER overload response"/>
    <property type="evidence" value="ECO:0000266"/>
    <property type="project" value="RGD"/>
</dbReference>
<dbReference type="GO" id="GO:0048144">
    <property type="term" value="P:fibroblast proliferation"/>
    <property type="evidence" value="ECO:0000266"/>
    <property type="project" value="RGD"/>
</dbReference>
<dbReference type="GO" id="GO:0007369">
    <property type="term" value="P:gastrulation"/>
    <property type="evidence" value="ECO:0000266"/>
    <property type="project" value="RGD"/>
</dbReference>
<dbReference type="GO" id="GO:0014009">
    <property type="term" value="P:glial cell proliferation"/>
    <property type="evidence" value="ECO:0000266"/>
    <property type="project" value="RGD"/>
</dbReference>
<dbReference type="GO" id="GO:0019661">
    <property type="term" value="P:glucose catabolic process to lactate via pyruvate"/>
    <property type="evidence" value="ECO:0000266"/>
    <property type="project" value="RGD"/>
</dbReference>
<dbReference type="GO" id="GO:0007507">
    <property type="term" value="P:heart development"/>
    <property type="evidence" value="ECO:0000266"/>
    <property type="project" value="RGD"/>
</dbReference>
<dbReference type="GO" id="GO:0002244">
    <property type="term" value="P:hematopoietic progenitor cell differentiation"/>
    <property type="evidence" value="ECO:0000266"/>
    <property type="project" value="RGD"/>
</dbReference>
<dbReference type="GO" id="GO:0060218">
    <property type="term" value="P:hematopoietic stem cell differentiation"/>
    <property type="evidence" value="ECO:0000266"/>
    <property type="project" value="RGD"/>
</dbReference>
<dbReference type="GO" id="GO:0001701">
    <property type="term" value="P:in utero embryonic development"/>
    <property type="evidence" value="ECO:0000266"/>
    <property type="project" value="RGD"/>
</dbReference>
<dbReference type="GO" id="GO:0072332">
    <property type="term" value="P:intrinsic apoptotic signaling pathway by p53 class mediator"/>
    <property type="evidence" value="ECO:0000266"/>
    <property type="project" value="RGD"/>
</dbReference>
<dbReference type="GO" id="GO:0042771">
    <property type="term" value="P:intrinsic apoptotic signaling pathway in response to DNA damage by p53 class mediator"/>
    <property type="evidence" value="ECO:0000266"/>
    <property type="project" value="RGD"/>
</dbReference>
<dbReference type="GO" id="GO:0070059">
    <property type="term" value="P:intrinsic apoptotic signaling pathway in response to endoplasmic reticulum stress"/>
    <property type="evidence" value="ECO:0000266"/>
    <property type="project" value="RGD"/>
</dbReference>
<dbReference type="GO" id="GO:1990144">
    <property type="term" value="P:intrinsic apoptotic signaling pathway in response to hypoxia"/>
    <property type="evidence" value="ECO:0000266"/>
    <property type="project" value="RGD"/>
</dbReference>
<dbReference type="GO" id="GO:0043504">
    <property type="term" value="P:mitochondrial DNA repair"/>
    <property type="evidence" value="ECO:0000266"/>
    <property type="project" value="RGD"/>
</dbReference>
<dbReference type="GO" id="GO:0000423">
    <property type="term" value="P:mitophagy"/>
    <property type="evidence" value="ECO:0000266"/>
    <property type="project" value="RGD"/>
</dbReference>
<dbReference type="GO" id="GO:0031571">
    <property type="term" value="P:mitotic G1 DNA damage checkpoint signaling"/>
    <property type="evidence" value="ECO:0000266"/>
    <property type="project" value="RGD"/>
</dbReference>
<dbReference type="GO" id="GO:0009299">
    <property type="term" value="P:mRNA transcription"/>
    <property type="evidence" value="ECO:0000266"/>
    <property type="project" value="RGD"/>
</dbReference>
<dbReference type="GO" id="GO:0035264">
    <property type="term" value="P:multicellular organism growth"/>
    <property type="evidence" value="ECO:0000266"/>
    <property type="project" value="RGD"/>
</dbReference>
<dbReference type="GO" id="GO:0070266">
    <property type="term" value="P:necroptotic process"/>
    <property type="evidence" value="ECO:0000266"/>
    <property type="project" value="RGD"/>
</dbReference>
<dbReference type="GO" id="GO:0043066">
    <property type="term" value="P:negative regulation of apoptotic process"/>
    <property type="evidence" value="ECO:0000315"/>
    <property type="project" value="RGD"/>
</dbReference>
<dbReference type="GO" id="GO:0030308">
    <property type="term" value="P:negative regulation of cell growth"/>
    <property type="evidence" value="ECO:0000250"/>
    <property type="project" value="UniProtKB"/>
</dbReference>
<dbReference type="GO" id="GO:0008285">
    <property type="term" value="P:negative regulation of cell population proliferation"/>
    <property type="evidence" value="ECO:0000315"/>
    <property type="project" value="ARUK-UCL"/>
</dbReference>
<dbReference type="GO" id="GO:2000279">
    <property type="term" value="P:negative regulation of DNA biosynthetic process"/>
    <property type="evidence" value="ECO:0000315"/>
    <property type="project" value="RGD"/>
</dbReference>
<dbReference type="GO" id="GO:0008156">
    <property type="term" value="P:negative regulation of DNA replication"/>
    <property type="evidence" value="ECO:0000266"/>
    <property type="project" value="RGD"/>
</dbReference>
<dbReference type="GO" id="GO:0045892">
    <property type="term" value="P:negative regulation of DNA-templated transcription"/>
    <property type="evidence" value="ECO:0000314"/>
    <property type="project" value="UniProtKB"/>
</dbReference>
<dbReference type="GO" id="GO:0048147">
    <property type="term" value="P:negative regulation of fibroblast proliferation"/>
    <property type="evidence" value="ECO:0000266"/>
    <property type="project" value="RGD"/>
</dbReference>
<dbReference type="GO" id="GO:1903451">
    <property type="term" value="P:negative regulation of G1 to G0 transition"/>
    <property type="evidence" value="ECO:0000266"/>
    <property type="project" value="RGD"/>
</dbReference>
<dbReference type="GO" id="GO:0010629">
    <property type="term" value="P:negative regulation of gene expression"/>
    <property type="evidence" value="ECO:0000266"/>
    <property type="project" value="RGD"/>
</dbReference>
<dbReference type="GO" id="GO:0060253">
    <property type="term" value="P:negative regulation of glial cell proliferation"/>
    <property type="evidence" value="ECO:0000266"/>
    <property type="project" value="RGD"/>
</dbReference>
<dbReference type="GO" id="GO:1904024">
    <property type="term" value="P:negative regulation of glucose catabolic process to lactate via pyruvate"/>
    <property type="evidence" value="ECO:0000266"/>
    <property type="project" value="RGD"/>
</dbReference>
<dbReference type="GO" id="GO:1903799">
    <property type="term" value="P:negative regulation of miRNA processing"/>
    <property type="evidence" value="ECO:0000266"/>
    <property type="project" value="RGD"/>
</dbReference>
<dbReference type="GO" id="GO:1901525">
    <property type="term" value="P:negative regulation of mitophagy"/>
    <property type="evidence" value="ECO:0000266"/>
    <property type="project" value="RGD"/>
</dbReference>
<dbReference type="GO" id="GO:0045930">
    <property type="term" value="P:negative regulation of mitotic cell cycle"/>
    <property type="evidence" value="ECO:0000266"/>
    <property type="project" value="RGD"/>
</dbReference>
<dbReference type="GO" id="GO:0007406">
    <property type="term" value="P:negative regulation of neuroblast proliferation"/>
    <property type="evidence" value="ECO:0000266"/>
    <property type="project" value="RGD"/>
</dbReference>
<dbReference type="GO" id="GO:1905856">
    <property type="term" value="P:negative regulation of pentose-phosphate shunt"/>
    <property type="evidence" value="ECO:0000266"/>
    <property type="project" value="RGD"/>
</dbReference>
<dbReference type="GO" id="GO:2000871">
    <property type="term" value="P:negative regulation of progesterone secretion"/>
    <property type="evidence" value="ECO:0000266"/>
    <property type="project" value="RGD"/>
</dbReference>
<dbReference type="GO" id="GO:0045861">
    <property type="term" value="P:negative regulation of proteolysis"/>
    <property type="evidence" value="ECO:0000266"/>
    <property type="project" value="RGD"/>
</dbReference>
<dbReference type="GO" id="GO:2000378">
    <property type="term" value="P:negative regulation of reactive oxygen species metabolic process"/>
    <property type="evidence" value="ECO:0000266"/>
    <property type="project" value="RGD"/>
</dbReference>
<dbReference type="GO" id="GO:0048662">
    <property type="term" value="P:negative regulation of smooth muscle cell proliferation"/>
    <property type="evidence" value="ECO:0000315"/>
    <property type="project" value="RGD"/>
</dbReference>
<dbReference type="GO" id="GO:2000647">
    <property type="term" value="P:negative regulation of stem cell proliferation"/>
    <property type="evidence" value="ECO:0000266"/>
    <property type="project" value="RGD"/>
</dbReference>
<dbReference type="GO" id="GO:0032211">
    <property type="term" value="P:negative regulation of telomere maintenance via telomerase"/>
    <property type="evidence" value="ECO:0000266"/>
    <property type="project" value="RGD"/>
</dbReference>
<dbReference type="GO" id="GO:0000122">
    <property type="term" value="P:negative regulation of transcription by RNA polymerase II"/>
    <property type="evidence" value="ECO:0000266"/>
    <property type="project" value="RGD"/>
</dbReference>
<dbReference type="GO" id="GO:0030512">
    <property type="term" value="P:negative regulation of transforming growth factor beta receptor signaling pathway"/>
    <property type="evidence" value="ECO:0000266"/>
    <property type="project" value="RGD"/>
</dbReference>
<dbReference type="GO" id="GO:0007405">
    <property type="term" value="P:neuroblast proliferation"/>
    <property type="evidence" value="ECO:0000266"/>
    <property type="project" value="RGD"/>
</dbReference>
<dbReference type="GO" id="GO:0051402">
    <property type="term" value="P:neuron apoptotic process"/>
    <property type="evidence" value="ECO:0000266"/>
    <property type="project" value="RGD"/>
</dbReference>
<dbReference type="GO" id="GO:0006289">
    <property type="term" value="P:nucleotide-excision repair"/>
    <property type="evidence" value="ECO:0000250"/>
    <property type="project" value="UniProtKB"/>
</dbReference>
<dbReference type="GO" id="GO:0097252">
    <property type="term" value="P:oligodendrocyte apoptotic process"/>
    <property type="evidence" value="ECO:0000250"/>
    <property type="project" value="UniProtKB"/>
</dbReference>
<dbReference type="GO" id="GO:0090403">
    <property type="term" value="P:oxidative stress-induced premature senescence"/>
    <property type="evidence" value="ECO:0000266"/>
    <property type="project" value="RGD"/>
</dbReference>
<dbReference type="GO" id="GO:0043065">
    <property type="term" value="P:positive regulation of apoptotic process"/>
    <property type="evidence" value="ECO:0000315"/>
    <property type="project" value="RGD"/>
</dbReference>
<dbReference type="GO" id="GO:0010666">
    <property type="term" value="P:positive regulation of cardiac muscle cell apoptotic process"/>
    <property type="evidence" value="ECO:0000266"/>
    <property type="project" value="RGD"/>
</dbReference>
<dbReference type="GO" id="GO:0045787">
    <property type="term" value="P:positive regulation of cell cycle"/>
    <property type="evidence" value="ECO:0000315"/>
    <property type="project" value="RGD"/>
</dbReference>
<dbReference type="GO" id="GO:2000774">
    <property type="term" value="P:positive regulation of cellular senescence"/>
    <property type="evidence" value="ECO:0000266"/>
    <property type="project" value="RGD"/>
</dbReference>
<dbReference type="GO" id="GO:0045893">
    <property type="term" value="P:positive regulation of DNA-templated transcription"/>
    <property type="evidence" value="ECO:0000266"/>
    <property type="project" value="RGD"/>
</dbReference>
<dbReference type="GO" id="GO:1900119">
    <property type="term" value="P:positive regulation of execution phase of apoptosis"/>
    <property type="evidence" value="ECO:0000266"/>
    <property type="project" value="RGD"/>
</dbReference>
<dbReference type="GO" id="GO:0010628">
    <property type="term" value="P:positive regulation of gene expression"/>
    <property type="evidence" value="ECO:0000316"/>
    <property type="project" value="ARUK-UCL"/>
</dbReference>
<dbReference type="GO" id="GO:2001244">
    <property type="term" value="P:positive regulation of intrinsic apoptotic signaling pathway"/>
    <property type="evidence" value="ECO:0000315"/>
    <property type="project" value="UniProtKB"/>
</dbReference>
<dbReference type="GO" id="GO:0002687">
    <property type="term" value="P:positive regulation of leukocyte migration"/>
    <property type="evidence" value="ECO:0000315"/>
    <property type="project" value="RGD"/>
</dbReference>
<dbReference type="GO" id="GO:1902895">
    <property type="term" value="P:positive regulation of miRNA transcription"/>
    <property type="evidence" value="ECO:0000266"/>
    <property type="project" value="RGD"/>
</dbReference>
<dbReference type="GO" id="GO:0035794">
    <property type="term" value="P:positive regulation of mitochondrial membrane permeability"/>
    <property type="evidence" value="ECO:0000266"/>
    <property type="project" value="RGD"/>
</dbReference>
<dbReference type="GO" id="GO:0043525">
    <property type="term" value="P:positive regulation of neuron apoptotic process"/>
    <property type="evidence" value="ECO:0000266"/>
    <property type="project" value="RGD"/>
</dbReference>
<dbReference type="GO" id="GO:0062100">
    <property type="term" value="P:positive regulation of programmed necrotic cell death"/>
    <property type="evidence" value="ECO:0000266"/>
    <property type="project" value="RGD"/>
</dbReference>
<dbReference type="GO" id="GO:2000379">
    <property type="term" value="P:positive regulation of reactive oxygen species metabolic process"/>
    <property type="evidence" value="ECO:0000266"/>
    <property type="project" value="RGD"/>
</dbReference>
<dbReference type="GO" id="GO:0090200">
    <property type="term" value="P:positive regulation of release of cytochrome c from mitochondria"/>
    <property type="evidence" value="ECO:0000266"/>
    <property type="project" value="RGD"/>
</dbReference>
<dbReference type="GO" id="GO:0045899">
    <property type="term" value="P:positive regulation of RNA polymerase II transcription preinitiation complex assembly"/>
    <property type="evidence" value="ECO:0000266"/>
    <property type="project" value="RGD"/>
</dbReference>
<dbReference type="GO" id="GO:0070245">
    <property type="term" value="P:positive regulation of thymocyte apoptotic process"/>
    <property type="evidence" value="ECO:0000266"/>
    <property type="project" value="RGD"/>
</dbReference>
<dbReference type="GO" id="GO:0045944">
    <property type="term" value="P:positive regulation of transcription by RNA polymerase II"/>
    <property type="evidence" value="ECO:0000314"/>
    <property type="project" value="BHF-UCL"/>
</dbReference>
<dbReference type="GO" id="GO:0006606">
    <property type="term" value="P:protein import into nucleus"/>
    <property type="evidence" value="ECO:0000266"/>
    <property type="project" value="RGD"/>
</dbReference>
<dbReference type="GO" id="GO:0008104">
    <property type="term" value="P:protein localization"/>
    <property type="evidence" value="ECO:0000266"/>
    <property type="project" value="RGD"/>
</dbReference>
<dbReference type="GO" id="GO:0050821">
    <property type="term" value="P:protein stabilization"/>
    <property type="evidence" value="ECO:0000266"/>
    <property type="project" value="RGD"/>
</dbReference>
<dbReference type="GO" id="GO:0051262">
    <property type="term" value="P:protein tetramerization"/>
    <property type="evidence" value="ECO:0007669"/>
    <property type="project" value="InterPro"/>
</dbReference>
<dbReference type="GO" id="GO:0065003">
    <property type="term" value="P:protein-containing complex assembly"/>
    <property type="evidence" value="ECO:0000266"/>
    <property type="project" value="RGD"/>
</dbReference>
<dbReference type="GO" id="GO:0007265">
    <property type="term" value="P:Ras protein signal transduction"/>
    <property type="evidence" value="ECO:0000266"/>
    <property type="project" value="RGD"/>
</dbReference>
<dbReference type="GO" id="GO:0072593">
    <property type="term" value="P:reactive oxygen species metabolic process"/>
    <property type="evidence" value="ECO:0000266"/>
    <property type="project" value="RGD"/>
</dbReference>
<dbReference type="GO" id="GO:0042981">
    <property type="term" value="P:regulation of apoptotic process"/>
    <property type="evidence" value="ECO:0000266"/>
    <property type="project" value="RGD"/>
</dbReference>
<dbReference type="GO" id="GO:0051726">
    <property type="term" value="P:regulation of cell cycle"/>
    <property type="evidence" value="ECO:0000315"/>
    <property type="project" value="ARUK-UCL"/>
</dbReference>
<dbReference type="GO" id="GO:1902749">
    <property type="term" value="P:regulation of cell cycle G2/M phase transition"/>
    <property type="evidence" value="ECO:0000266"/>
    <property type="project" value="RGD"/>
</dbReference>
<dbReference type="GO" id="GO:0042127">
    <property type="term" value="P:regulation of cell population proliferation"/>
    <property type="evidence" value="ECO:0000266"/>
    <property type="project" value="RGD"/>
</dbReference>
<dbReference type="GO" id="GO:2000772">
    <property type="term" value="P:regulation of cellular senescence"/>
    <property type="evidence" value="ECO:0000266"/>
    <property type="project" value="RGD"/>
</dbReference>
<dbReference type="GO" id="GO:0043516">
    <property type="term" value="P:regulation of DNA damage response, signal transduction by p53 class mediator"/>
    <property type="evidence" value="ECO:0000266"/>
    <property type="project" value="RGD"/>
</dbReference>
<dbReference type="GO" id="GO:0006355">
    <property type="term" value="P:regulation of DNA-templated transcription"/>
    <property type="evidence" value="ECO:0000266"/>
    <property type="project" value="RGD"/>
</dbReference>
<dbReference type="GO" id="GO:2000269">
    <property type="term" value="P:regulation of fibroblast apoptotic process"/>
    <property type="evidence" value="ECO:0000266"/>
    <property type="project" value="RGD"/>
</dbReference>
<dbReference type="GO" id="GO:0051453">
    <property type="term" value="P:regulation of intracellular pH"/>
    <property type="evidence" value="ECO:0000315"/>
    <property type="project" value="RGD"/>
</dbReference>
<dbReference type="GO" id="GO:1902253">
    <property type="term" value="P:regulation of intrinsic apoptotic signaling pathway by p53 class mediator"/>
    <property type="evidence" value="ECO:0000266"/>
    <property type="project" value="RGD"/>
</dbReference>
<dbReference type="GO" id="GO:1902108">
    <property type="term" value="P:regulation of mitochondrial membrane permeability involved in apoptotic process"/>
    <property type="evidence" value="ECO:0000266"/>
    <property type="project" value="RGD"/>
</dbReference>
<dbReference type="GO" id="GO:0007346">
    <property type="term" value="P:regulation of mitotic cell cycle"/>
    <property type="evidence" value="ECO:0000266"/>
    <property type="project" value="RGD"/>
</dbReference>
<dbReference type="GO" id="GO:0043523">
    <property type="term" value="P:regulation of neuron apoptotic process"/>
    <property type="evidence" value="ECO:0000266"/>
    <property type="project" value="RGD"/>
</dbReference>
<dbReference type="GO" id="GO:0090276">
    <property type="term" value="P:regulation of peptide hormone secretion"/>
    <property type="evidence" value="ECO:0000266"/>
    <property type="project" value="RGD"/>
</dbReference>
<dbReference type="GO" id="GO:0032306">
    <property type="term" value="P:regulation of prostaglandin secretion"/>
    <property type="evidence" value="ECO:0000266"/>
    <property type="project" value="RGD"/>
</dbReference>
<dbReference type="GO" id="GO:0070243">
    <property type="term" value="P:regulation of thymocyte apoptotic process"/>
    <property type="evidence" value="ECO:0000266"/>
    <property type="project" value="RGD"/>
</dbReference>
<dbReference type="GO" id="GO:0034103">
    <property type="term" value="P:regulation of tissue remodeling"/>
    <property type="evidence" value="ECO:0000266"/>
    <property type="project" value="RGD"/>
</dbReference>
<dbReference type="GO" id="GO:0006357">
    <property type="term" value="P:regulation of transcription by RNA polymerase II"/>
    <property type="evidence" value="ECO:0000266"/>
    <property type="project" value="RGD"/>
</dbReference>
<dbReference type="GO" id="GO:0001836">
    <property type="term" value="P:release of cytochrome c from mitochondria"/>
    <property type="evidence" value="ECO:0000266"/>
    <property type="project" value="RGD"/>
</dbReference>
<dbReference type="GO" id="GO:0090399">
    <property type="term" value="P:replicative senescence"/>
    <property type="evidence" value="ECO:0000266"/>
    <property type="project" value="RGD"/>
</dbReference>
<dbReference type="GO" id="GO:0043200">
    <property type="term" value="P:response to amino acid"/>
    <property type="evidence" value="ECO:0000270"/>
    <property type="project" value="RGD"/>
</dbReference>
<dbReference type="GO" id="GO:0046677">
    <property type="term" value="P:response to antibiotic"/>
    <property type="evidence" value="ECO:0000266"/>
    <property type="project" value="RGD"/>
</dbReference>
<dbReference type="GO" id="GO:1901423">
    <property type="term" value="P:response to benzene"/>
    <property type="evidence" value="ECO:0000270"/>
    <property type="project" value="RGD"/>
</dbReference>
<dbReference type="GO" id="GO:0031000">
    <property type="term" value="P:response to caffeine"/>
    <property type="evidence" value="ECO:0000270"/>
    <property type="project" value="RGD"/>
</dbReference>
<dbReference type="GO" id="GO:0034097">
    <property type="term" value="P:response to cytokine"/>
    <property type="evidence" value="ECO:0000270"/>
    <property type="project" value="RGD"/>
</dbReference>
<dbReference type="GO" id="GO:0045471">
    <property type="term" value="P:response to ethanol"/>
    <property type="evidence" value="ECO:0000270"/>
    <property type="project" value="RGD"/>
</dbReference>
<dbReference type="GO" id="GO:0010332">
    <property type="term" value="P:response to gamma radiation"/>
    <property type="evidence" value="ECO:0000266"/>
    <property type="project" value="RGD"/>
</dbReference>
<dbReference type="GO" id="GO:0055093">
    <property type="term" value="P:response to hyperoxia"/>
    <property type="evidence" value="ECO:0000270"/>
    <property type="project" value="RGD"/>
</dbReference>
<dbReference type="GO" id="GO:0002931">
    <property type="term" value="P:response to ischemia"/>
    <property type="evidence" value="ECO:0000266"/>
    <property type="project" value="RGD"/>
</dbReference>
<dbReference type="GO" id="GO:0010038">
    <property type="term" value="P:response to metal ion"/>
    <property type="evidence" value="ECO:0000270"/>
    <property type="project" value="RGD"/>
</dbReference>
<dbReference type="GO" id="GO:0006979">
    <property type="term" value="P:response to oxidative stress"/>
    <property type="evidence" value="ECO:0000270"/>
    <property type="project" value="RGD"/>
</dbReference>
<dbReference type="GO" id="GO:0032526">
    <property type="term" value="P:response to retinoic acid"/>
    <property type="evidence" value="ECO:0000270"/>
    <property type="project" value="RGD"/>
</dbReference>
<dbReference type="GO" id="GO:0009651">
    <property type="term" value="P:response to salt stress"/>
    <property type="evidence" value="ECO:0000266"/>
    <property type="project" value="RGD"/>
</dbReference>
<dbReference type="GO" id="GO:0009411">
    <property type="term" value="P:response to UV"/>
    <property type="evidence" value="ECO:0000270"/>
    <property type="project" value="RGD"/>
</dbReference>
<dbReference type="GO" id="GO:0010224">
    <property type="term" value="P:response to UV-B"/>
    <property type="evidence" value="ECO:0000270"/>
    <property type="project" value="RGD"/>
</dbReference>
<dbReference type="GO" id="GO:0033552">
    <property type="term" value="P:response to vitamin B3"/>
    <property type="evidence" value="ECO:0000270"/>
    <property type="project" value="RGD"/>
</dbReference>
<dbReference type="GO" id="GO:0010165">
    <property type="term" value="P:response to X-ray"/>
    <property type="evidence" value="ECO:0000315"/>
    <property type="project" value="RGD"/>
</dbReference>
<dbReference type="GO" id="GO:0009410">
    <property type="term" value="P:response to xenobiotic stimulus"/>
    <property type="evidence" value="ECO:0000270"/>
    <property type="project" value="RGD"/>
</dbReference>
<dbReference type="GO" id="GO:0009303">
    <property type="term" value="P:rRNA transcription"/>
    <property type="evidence" value="ECO:0000266"/>
    <property type="project" value="RGD"/>
</dbReference>
<dbReference type="GO" id="GO:0072331">
    <property type="term" value="P:signal transduction by p53 class mediator"/>
    <property type="evidence" value="ECO:0000266"/>
    <property type="project" value="RGD"/>
</dbReference>
<dbReference type="GO" id="GO:0001756">
    <property type="term" value="P:somitogenesis"/>
    <property type="evidence" value="ECO:0000266"/>
    <property type="project" value="RGD"/>
</dbReference>
<dbReference type="GO" id="GO:0007283">
    <property type="term" value="P:spermatogenesis"/>
    <property type="evidence" value="ECO:0000315"/>
    <property type="project" value="RGD"/>
</dbReference>
<dbReference type="GO" id="GO:0072089">
    <property type="term" value="P:stem cell proliferation"/>
    <property type="evidence" value="ECO:0000266"/>
    <property type="project" value="RGD"/>
</dbReference>
<dbReference type="GO" id="GO:0033077">
    <property type="term" value="P:T cell differentiation in thymus"/>
    <property type="evidence" value="ECO:0000266"/>
    <property type="project" value="RGD"/>
</dbReference>
<dbReference type="GO" id="GO:0002360">
    <property type="term" value="P:T cell lineage commitment"/>
    <property type="evidence" value="ECO:0000266"/>
    <property type="project" value="RGD"/>
</dbReference>
<dbReference type="GO" id="GO:0002309">
    <property type="term" value="P:T cell proliferation involved in immune response"/>
    <property type="evidence" value="ECO:0000266"/>
    <property type="project" value="RGD"/>
</dbReference>
<dbReference type="GO" id="GO:0070242">
    <property type="term" value="P:thymocyte apoptotic process"/>
    <property type="evidence" value="ECO:0000266"/>
    <property type="project" value="RGD"/>
</dbReference>
<dbReference type="GO" id="GO:0045815">
    <property type="term" value="P:transcription initiation-coupled chromatin remodeling"/>
    <property type="evidence" value="ECO:0000266"/>
    <property type="project" value="RGD"/>
</dbReference>
<dbReference type="GO" id="GO:0007179">
    <property type="term" value="P:transforming growth factor beta receptor signaling pathway"/>
    <property type="evidence" value="ECO:0000266"/>
    <property type="project" value="RGD"/>
</dbReference>
<dbReference type="GO" id="GO:0033209">
    <property type="term" value="P:tumor necrosis factor-mediated signaling pathway"/>
    <property type="evidence" value="ECO:0000266"/>
    <property type="project" value="RGD"/>
</dbReference>
<dbReference type="GO" id="GO:0060333">
    <property type="term" value="P:type II interferon-mediated signaling pathway"/>
    <property type="evidence" value="ECO:0000266"/>
    <property type="project" value="RGD"/>
</dbReference>
<dbReference type="GO" id="GO:0016032">
    <property type="term" value="P:viral process"/>
    <property type="evidence" value="ECO:0000266"/>
    <property type="project" value="RGD"/>
</dbReference>
<dbReference type="CDD" id="cd08367">
    <property type="entry name" value="P53"/>
    <property type="match status" value="1"/>
</dbReference>
<dbReference type="FunFam" id="2.60.40.720:FF:000003">
    <property type="entry name" value="Cellular tumor antigen p53"/>
    <property type="match status" value="1"/>
</dbReference>
<dbReference type="FunFam" id="4.10.170.10:FF:000003">
    <property type="entry name" value="Cellular tumor antigen p53"/>
    <property type="match status" value="1"/>
</dbReference>
<dbReference type="Gene3D" id="2.60.40.720">
    <property type="match status" value="1"/>
</dbReference>
<dbReference type="Gene3D" id="6.10.50.20">
    <property type="match status" value="1"/>
</dbReference>
<dbReference type="Gene3D" id="4.10.170.10">
    <property type="entry name" value="p53-like tetramerisation domain"/>
    <property type="match status" value="1"/>
</dbReference>
<dbReference type="InterPro" id="IPR008967">
    <property type="entry name" value="p53-like_TF_DNA-bd_sf"/>
</dbReference>
<dbReference type="InterPro" id="IPR012346">
    <property type="entry name" value="p53/RUNT-type_TF_DNA-bd_sf"/>
</dbReference>
<dbReference type="InterPro" id="IPR011615">
    <property type="entry name" value="p53_DNA-bd"/>
</dbReference>
<dbReference type="InterPro" id="IPR036674">
    <property type="entry name" value="p53_tetramer_sf"/>
</dbReference>
<dbReference type="InterPro" id="IPR010991">
    <property type="entry name" value="p53_tetrameristn"/>
</dbReference>
<dbReference type="InterPro" id="IPR013872">
    <property type="entry name" value="p53_transactivation_domain"/>
</dbReference>
<dbReference type="InterPro" id="IPR002117">
    <property type="entry name" value="p53_tumour_suppressor"/>
</dbReference>
<dbReference type="PANTHER" id="PTHR11447">
    <property type="entry name" value="CELLULAR TUMOR ANTIGEN P53"/>
    <property type="match status" value="1"/>
</dbReference>
<dbReference type="PANTHER" id="PTHR11447:SF6">
    <property type="entry name" value="CELLULAR TUMOR ANTIGEN P53"/>
    <property type="match status" value="1"/>
</dbReference>
<dbReference type="Pfam" id="PF00870">
    <property type="entry name" value="P53"/>
    <property type="match status" value="1"/>
</dbReference>
<dbReference type="Pfam" id="PF08563">
    <property type="entry name" value="P53_TAD"/>
    <property type="match status" value="1"/>
</dbReference>
<dbReference type="Pfam" id="PF07710">
    <property type="entry name" value="P53_tetramer"/>
    <property type="match status" value="1"/>
</dbReference>
<dbReference type="PRINTS" id="PR00386">
    <property type="entry name" value="P53SUPPRESSR"/>
</dbReference>
<dbReference type="SUPFAM" id="SSF47719">
    <property type="entry name" value="p53 tetramerization domain"/>
    <property type="match status" value="1"/>
</dbReference>
<dbReference type="SUPFAM" id="SSF49417">
    <property type="entry name" value="p53-like transcription factors"/>
    <property type="match status" value="1"/>
</dbReference>
<dbReference type="PROSITE" id="PS00348">
    <property type="entry name" value="P53"/>
    <property type="match status" value="1"/>
</dbReference>
<sequence length="391" mass="43451">MEDSQSDMSIELPLSQETFSCLWKLLPPDDILPTTATGSPNSMEDLFLPQDVAELLEGPEEALQVSAPAAQEPGTEAPAPVAPASATPWPLSSSVPSQKTYQGNYGFHLGFLQSGTAKSVMCTYSISLNKLFCQLAKTCPVQLWVTSTPPPGTRVRAMAIYKKSQHMTEVVRRCPHHERCSDGDGLAPPQHLIRVEGNPYAEYLDDRQTFRHSVVVPYEPPEVGSDYTTIHYKYMCNSSCMGGMNRRPILTIITLEDSSGNLLGRDSFEVRVCACPGRDRRTEEENFRKKEEHCPELPPGSAKRALPTSTSSSPQQKKKPLDGEYFTLKIRGRERFEMFRELNEALELKDARAAEESGDSRAHSSYPKTKKGQSTSRHKKPMIKKVGPDSD</sequence>
<accession>P10361</accession>
<accession>O09168</accession>
<accession>Q4KMA9</accession>
<accession>Q66HM0</accession>
<feature type="chain" id="PRO_0000185712" description="Cellular tumor antigen p53">
    <location>
        <begin position="1"/>
        <end position="391"/>
    </location>
</feature>
<feature type="DNA-binding region" evidence="3">
    <location>
        <begin position="100"/>
        <end position="290"/>
    </location>
</feature>
<feature type="region of interest" description="Interaction with CCAR2" evidence="3">
    <location>
        <begin position="1"/>
        <end position="318"/>
    </location>
</feature>
<feature type="region of interest" description="Transcription activation (acidic)">
    <location>
        <begin position="1"/>
        <end position="47"/>
    </location>
</feature>
<feature type="region of interest" description="Interaction with WWOX" evidence="1">
    <location>
        <begin position="64"/>
        <end position="108"/>
    </location>
</feature>
<feature type="region of interest" description="Disordered" evidence="4">
    <location>
        <begin position="65"/>
        <end position="90"/>
    </location>
</feature>
<feature type="region of interest" description="Interaction with HIPK1" evidence="1">
    <location>
        <begin position="98"/>
        <end position="368"/>
    </location>
</feature>
<feature type="region of interest" description="Required for interaction with ZNF385A" evidence="1">
    <location>
        <begin position="98"/>
        <end position="298"/>
    </location>
</feature>
<feature type="region of interest" description="Required for interaction with FBXO42" evidence="1">
    <location>
        <begin position="111"/>
        <end position="234"/>
    </location>
</feature>
<feature type="region of interest" description="Interaction with AXIN1" evidence="1">
    <location>
        <begin position="114"/>
        <end position="290"/>
    </location>
</feature>
<feature type="region of interest" description="Interaction with E4F1" evidence="1">
    <location>
        <begin position="254"/>
        <end position="292"/>
    </location>
</feature>
<feature type="region of interest" description="Interaction with DNA" evidence="1">
    <location>
        <begin position="271"/>
        <end position="278"/>
    </location>
</feature>
<feature type="region of interest" description="Disordered" evidence="4">
    <location>
        <begin position="281"/>
        <end position="324"/>
    </location>
</feature>
<feature type="region of interest" description="Interaction with HIPK2" evidence="1">
    <location>
        <begin position="317"/>
        <end position="358"/>
    </location>
</feature>
<feature type="region of interest" description="Oligomerization">
    <location>
        <begin position="323"/>
        <end position="354"/>
    </location>
</feature>
<feature type="region of interest" description="Disordered" evidence="4">
    <location>
        <begin position="350"/>
        <end position="391"/>
    </location>
</feature>
<feature type="region of interest" description="Interaction with USP7" evidence="1">
    <location>
        <begin position="357"/>
        <end position="361"/>
    </location>
</feature>
<feature type="region of interest" description="Basic (repression of DNA-binding)">
    <location>
        <begin position="366"/>
        <end position="385"/>
    </location>
</feature>
<feature type="short sequence motif" description="Bipartite nuclear localization signal" evidence="1">
    <location>
        <begin position="303"/>
        <end position="319"/>
    </location>
</feature>
<feature type="short sequence motif" description="Nuclear export signal" evidence="1">
    <location>
        <begin position="337"/>
        <end position="348"/>
    </location>
</feature>
<feature type="short sequence motif" description="[KR]-[STA]-K motif">
    <location>
        <begin position="368"/>
        <end position="370"/>
    </location>
</feature>
<feature type="compositionally biased region" description="Low complexity" evidence="4">
    <location>
        <begin position="77"/>
        <end position="90"/>
    </location>
</feature>
<feature type="compositionally biased region" description="Basic and acidic residues" evidence="4">
    <location>
        <begin position="281"/>
        <end position="295"/>
    </location>
</feature>
<feature type="compositionally biased region" description="Basic and acidic residues" evidence="4">
    <location>
        <begin position="350"/>
        <end position="362"/>
    </location>
</feature>
<feature type="compositionally biased region" description="Basic residues" evidence="4">
    <location>
        <begin position="368"/>
        <end position="383"/>
    </location>
</feature>
<feature type="binding site" evidence="3">
    <location>
        <position position="174"/>
    </location>
    <ligand>
        <name>Zn(2+)</name>
        <dbReference type="ChEBI" id="CHEBI:29105"/>
    </ligand>
</feature>
<feature type="binding site" evidence="3">
    <location>
        <position position="177"/>
    </location>
    <ligand>
        <name>Zn(2+)</name>
        <dbReference type="ChEBI" id="CHEBI:29105"/>
    </ligand>
</feature>
<feature type="binding site" evidence="3">
    <location>
        <position position="236"/>
    </location>
    <ligand>
        <name>Zn(2+)</name>
        <dbReference type="ChEBI" id="CHEBI:29105"/>
    </ligand>
</feature>
<feature type="binding site" evidence="3">
    <location>
        <position position="240"/>
    </location>
    <ligand>
        <name>Zn(2+)</name>
        <dbReference type="ChEBI" id="CHEBI:29105"/>
    </ligand>
</feature>
<feature type="site" description="Interaction with DNA" evidence="3">
    <location>
        <position position="118"/>
    </location>
</feature>
<feature type="modified residue" description="Phosphoserine; by HIPK4" evidence="3">
    <location>
        <position position="9"/>
    </location>
</feature>
<feature type="modified residue" description="Phosphoserine; by CDK5, PRPK, AMPK, NUAK1 and ATM" evidence="3">
    <location>
        <position position="15"/>
    </location>
</feature>
<feature type="modified residue" description="Phosphothreonine; by CK1, VRK1 and VRK2" evidence="3">
    <location>
        <position position="18"/>
    </location>
</feature>
<feature type="modified residue" description="Phosphoserine; by CHEK2, CK1 and PLK3" evidence="3">
    <location>
        <position position="20"/>
    </location>
</feature>
<feature type="modified residue" description="Phosphoserine; by MAPKAPK5" evidence="3">
    <location>
        <position position="39"/>
    </location>
</feature>
<feature type="modified residue" description="N6-acetyllysine" evidence="3">
    <location>
        <position position="118"/>
    </location>
</feature>
<feature type="modified residue" description="N6-lactoyllysine" evidence="3">
    <location>
        <position position="118"/>
    </location>
</feature>
<feature type="modified residue" description="N6-lactoyllysine" evidence="3">
    <location>
        <position position="137"/>
    </location>
</feature>
<feature type="modified residue" description="Phosphoserine; by AURKB" evidence="3">
    <location>
        <position position="181"/>
    </location>
</feature>
<feature type="modified residue" description="Phosphoserine; by AURKB" evidence="3">
    <location>
        <position position="267"/>
    </location>
</feature>
<feature type="modified residue" description="Phosphothreonine; by AURKB" evidence="3">
    <location>
        <position position="282"/>
    </location>
</feature>
<feature type="modified residue" description="N6-acetyllysine" evidence="3">
    <location>
        <position position="303"/>
    </location>
</feature>
<feature type="modified residue" description="Phosphoserine; by AURKA, CDK1 and CDK2" evidence="3">
    <location>
        <position position="313"/>
    </location>
</feature>
<feature type="modified residue" description="N6-acetyllysine" evidence="2">
    <location>
        <position position="319"/>
    </location>
</feature>
<feature type="modified residue" description="Omega-N-methylarginine" evidence="3">
    <location>
        <position position="331"/>
    </location>
</feature>
<feature type="modified residue" description="Symmetric dimethylarginine" evidence="3">
    <location>
        <position position="333"/>
    </location>
</feature>
<feature type="modified residue" description="Symmetric dimethylarginine" evidence="3">
    <location>
        <position position="335"/>
    </location>
</feature>
<feature type="modified residue" description="N6,N6-dimethyllysine; alternate" evidence="3">
    <location>
        <position position="368"/>
    </location>
</feature>
<feature type="modified residue" description="N6-methyllysine; by SMYD2; alternate" evidence="3">
    <location>
        <position position="368"/>
    </location>
</feature>
<feature type="modified residue" description="N6-methyllysine; by SETD7" evidence="3">
    <location>
        <position position="370"/>
    </location>
</feature>
<feature type="modified residue" description="N6,N6-dimethyllysine; by EHMT1 and EHMT2; alternate" evidence="3">
    <location>
        <position position="371"/>
    </location>
</feature>
<feature type="modified residue" description="N6-acetyllysine; alternate" evidence="3">
    <location>
        <position position="371"/>
    </location>
</feature>
<feature type="modified residue" description="N6-acetyllysine" evidence="3">
    <location>
        <position position="379"/>
    </location>
</feature>
<feature type="modified residue" description="N6,N6-dimethyllysine; alternate" evidence="3">
    <location>
        <position position="380"/>
    </location>
</feature>
<feature type="modified residue" description="N6-acetyllysine; alternate" evidence="3">
    <location>
        <position position="380"/>
    </location>
</feature>
<feature type="modified residue" description="N6-methyllysine; by KMT5A; alternate" evidence="3">
    <location>
        <position position="380"/>
    </location>
</feature>
<feature type="modified residue" description="Phosphoserine; by CK2, CDK2 and NUAK1" evidence="3">
    <location>
        <position position="390"/>
    </location>
</feature>
<feature type="cross-link" description="Glycyl lysine isopeptide (Lys-Gly) (interchain with G-Cter in ubiquitin)" evidence="3">
    <location>
        <position position="24"/>
    </location>
</feature>
<feature type="cross-link" description="Glycyl lysine isopeptide (Lys-Gly) (interchain with G-Cter in ubiquitin)" evidence="3">
    <location>
        <position position="289"/>
    </location>
</feature>
<feature type="cross-link" description="Glycyl lysine isopeptide (Lys-Gly) (interchain with G-Cter in ubiquitin)" evidence="3">
    <location>
        <position position="290"/>
    </location>
</feature>
<feature type="cross-link" description="Glycyl lysine isopeptide (Lys-Gly) (interchain with G-Cter in ubiquitin)" evidence="3">
    <location>
        <position position="349"/>
    </location>
</feature>
<feature type="cross-link" description="Glycyl lysine isopeptide (Lys-Gly) (interchain with G-Cter in SUMO)" evidence="1">
    <location>
        <position position="384"/>
    </location>
</feature>
<feature type="sequence variant">
    <original>G</original>
    <variation>S</variation>
    <location>
        <position position="103"/>
    </location>
</feature>
<feature type="sequence variant">
    <original>E</original>
    <variation>G</variation>
    <location>
        <position position="256"/>
    </location>
</feature>
<feature type="sequence conflict" description="In Ref. 2; AAA41788." evidence="6" ref="2">
    <original>C</original>
    <variation>W</variation>
    <location>
        <position position="174"/>
    </location>
</feature>
<evidence type="ECO:0000250" key="1"/>
<evidence type="ECO:0000250" key="2">
    <source>
        <dbReference type="UniProtKB" id="P02340"/>
    </source>
</evidence>
<evidence type="ECO:0000250" key="3">
    <source>
        <dbReference type="UniProtKB" id="P04637"/>
    </source>
</evidence>
<evidence type="ECO:0000256" key="4">
    <source>
        <dbReference type="SAM" id="MobiDB-lite"/>
    </source>
</evidence>
<evidence type="ECO:0000269" key="5">
    <source>
    </source>
</evidence>
<evidence type="ECO:0000305" key="6"/>
<comment type="function">
    <text evidence="2 3">Multifunctional transcription factor that induces cell cycle arrest, DNA repair or apoptosis upon binding to its target DNA sequence. Acts as a tumor suppressor in many tumor types; induces growth arrest or apoptosis depending on the physiological circumstances and cell type. Negatively regulates cell division by controlling expression of a set of genes required for this process. One of the activated genes is an inhibitor of cyclin-dependent kinases. Apoptosis induction seems to be mediated either by stimulation of BAX and FAS antigen expression, or by repression of Bcl-2 expression. Its pro-apoptotic activity is activated via its interaction with PPP1R13B/ASPP1 or TP53BP2/ASPP2 (By similarity). However, this activity is inhibited when the interaction with PPP1R13B/ASPP1 or TP53BP2/ASPP2 is displaced by PPP1R13L/iASPP (By similarity). In cooperation with mitochondrial PPIF is involved in activating oxidative stress-induced necrosis; the function is largely independent of transcription. Prevents CDK7 kinase activity when associated to CAK complex in response to DNA damage, thus stopping cell cycle progression. Induces the transcription of long intergenic non-coding RNA p21 (lincRNA-p21) and lincRNA-Mkln1. LincRNA-p21 participates in TP53-dependent transcriptional repression leading to apoptosis and seems to have an effect on cell-cycle regulation. Regulates the circadian clock by repressing CLOCK-ARNTL/BMAL1-mediated transcriptional activation of PER2.</text>
</comment>
<comment type="cofactor">
    <cofactor evidence="1">
        <name>Zn(2+)</name>
        <dbReference type="ChEBI" id="CHEBI:29105"/>
    </cofactor>
    <text evidence="1">Binds 1 zinc ion per subunit.</text>
</comment>
<comment type="subunit">
    <text evidence="2 3 5">Forms homodimers and homotetramers (By similarity). Binds DNA as a homotetramer. Interacts with AXIN1. Probably part of a complex consisting of TP53, HIPK2 and AXIN1 (By similarity). Interacts with histone acetyltransferases EP300 and methyltransferases HRMT1L2 and CARM1, and recruits them to promoters. Interacts (via C-terminus) with TAF1; when TAF1 is part of the TFIID complex. Interacts with ING4; this interaction may be indirect. Found in a complex with CABLES1 and TP73. Interacts with HIPK1, HIPK2, and TP53INP1. Interacts with WWOX. Interacts with USP7 and SYVN1. Interacts with HSP90AB1 (PubMed:8663025). Interacts with CHD8; leading to recruit histone H1 and prevent transactivation activity (By similarity). Interacts with ARMC10, BANP, CDKN2AIP, NUAK1, STK11/LKB1, UHRF2 and E4F1. Interacts with YWHAZ; the interaction enhances TP53 transcriptional activity. Phosphorylation of YWHAZ on 'Ser-58' inhibits this interaction. Interacts (via DNA-binding domain) with MAML1 (via N-terminus). Interacts with MKRN1. Interacts with PML (via C-terminus). Interacts with MDM2; leading to ubiquitination and proteasomal degradation of TP53. Directly interacts with FBXO42; leading to ubiquitination and degradation of TP53. Interacts (phosphorylated at Ser-15 by ATM) with the phosphatase PP2A-PPP2R5C holoenzyme; regulates stress-induced TP53-dependent inhibition of cell proliferation. Interacts with PPP2R2A. Interacts with AURKA, DAXX, BRD7 and TRIM24. Interacts (when monomethylated at Lys-380) with L3MBTL1. Interacts with GRK5. Binds to the CAK complex (CDK7, cyclin H and MAT1) in response to DNA damage. Interacts with CDK5 in neurons. Interacts with AURKB, SETD2, UHRF2 and NOC2L. Interacts (via N-terminus) with PTK2/FAK1; this promotes ubiquitination by MDM2. Interacts with PTK2B/PYK2; this promotes ubiquitination by MDM2. Interacts with PRKCG. Interacts with PPIF; the association implicates preferentially tetrameric TP53, is induced by oxidative stress and is impaired by cyclosporin A (CsA). Interacts with SNAI1; the interaction induces SNAI1 degradation via MDM2-mediated ubiquitination and inhibits SNAI1-induced cell invasion. Interacts with UBC9. Interacts with ZNF385B; the interaction is direct. Interacts (via DNA-binding domain) with ZNF385A; the interaction is direct and enhances p53/TP53 transactivation functions on cell-cycle arrest target genes, resulting in growth arrest. Interacts with ANKRD2. Interacts with RFFL and RNF34; involved in p53/TP53 ubiquitination. Interacts with MTA1 and COP1. Interacts with CCAR2 (via N-terminus). Interacts with MORC3. Interacts (via C-terminus) with POU4F2 (via C-terminus). Interacts (via oligomerization region) with NOP53; the interaction is direct and may prevent the MDM2-mediated proteasomal degradation of TP53. Interacts with AFG1L; mediates mitochondrial translocation of TP53. Interacts with UBD (By similarity). Interacts with TAF6 (By similarity). Binds DNA as a homotetramer. Interacts with AXIN1. Probably part of a complex consisting of TP53, HIPK2 and AXIN1. Interacts with histone acetyltransferases EP300 and methyltransferases HRMT1L2 and CARM1, and recruits them to promoters. Interacts (via C-terminus) with TAF1; when TAF1 is part of the TFIID complex. Interacts with ING4; this interaction may be indirect. Found in a complex with CABLES1 and TP73. Interacts with HIPK1, HIPK2, and TP53INP1. Interacts with WWOX. Interacts with USP7 and SYVN1. Interacts with HSP90AB1. Interacts with CHD8; leading to recruit histone H1 and prevent transactivation activity. Interacts with ARMC10, BANP, CDKN2AIP, NUAK1, STK11/LKB1, UHRF2 and E4F. Interacts with YWHAZ; the interaction enhances TP53 transcriptional activity. Phosphorylation of YWHAZ on 'Ser-58' inhibits this interaction. Interacts (via DNA-binding domain) with MAML1 (via N-terminus). Interacts with MKRN1. Interacts with PML (via C-terminus). Interacts with MDM2; leading to ubiquitination and proteasomal degradation of TP53. Directly interacts with FBXO42; leading to ubiquitination and degradation of TP53. Interacts (phosphorylated at Ser-18 by ATM) with the phosphatase PP2A-PPP2R5C holoenzyme; regulates stress-induced TP53-dependent inhibition of cell proliferation. Interacts with PPP2R2A. Interacts with AURKA, DAXX, BRD7 and TRIM24. Interacts (when monomethylated at Lys-379) with L3MBTL1. Interacts with GRK5. Binds to the CAK complex (CDK7, cyclin H and MAT1) in response to DNA damage. Interacts with CDK5 in neurons. Interacts with AURKB, SETD2, UHRF2 and NOC2L. Interacts (via N-terminus) with PTK2/FAK1; this promotes ubiquitination by MDM2. Interacts with PTK2B/PYK2; this promotes ubiquitination by MDM2. Interacts with PRKCG. Interacts with PPIF; the association implicates preferentially tetrameric TP53, is induced by oxidative stress and is impaired by cyclosporin A (CsA). Interacts with SNAI1; the interaction induces SNAI1 degradation via MDM2-mediated ubiquitination and inhibits SNAI1-induced cell invasion. Interacts with UBC9. Interacts with ZNF385B; the interaction is direct. Interacts (via DNA-binding domain) with ZNF385A; the interaction is direct and enhances p53/TP53 transactivation functions on cell-cycle arrest target genes, resulting in growth arrest (By similarity). Interacts with ANKRD2. Interacts with RFFL and RNF34; involved in p53/TP53 ubiquitination. Interacts with MTA1 and COP1. Interacts with CCAR2 (via N-terminus). Interacts with MORC3. Interacts (via C-terminus) with POU4F2 (via C-terminus). Interacts (via oligomerization region) with NOP53; the interaction is direct and may prevent the MDM2-mediated proteasomal degradation of TP53. Interacts with AFG1L; mediates mitochondrial translocation of TP53. Interacts with UBD (By similarity). Interacts with C10orf90/FATS; the interaction inhibits binding of TP53 and MDM2 (By similarity). Interacts with NUPR1; interaction is stress-dependent. Forms a complex with EP300 and NUPR1; this complex binds CDKN1A promoter leading to transcriptional induction of CDKN1A (By similarity). Interacts with PRMT5 in response to DNA damage; the interaction is TTC5/STRAP dependent (By similarity). Interacts with PPP1R13L (via SH3 domain and ANK repeats); the interaction inhibits pro-apoptotic activity of p53/TP53 (By similarity). Interacts with PPP1R13B/ASPP1 and TP53BP2/ASPP2; the interactions promotes pro-apoptotic activity (By similarity). When phosphorylated at Ser-15, interacts with DDX3X and gamma-tubulin (By similarity). Interacts with KAT7/HBO1; leading to inhibit histone acetyltransferase activity of KAT7/HBO1 (By similarity). Interacts (via N-terminus) with E3 ubiquitin-protein ligase MUL1; the interaction results in ubiquitination of cytoplasmic TP53 at Lys-24 and subsequent proteasomal degradation (By similarity). Interacts with S100A4; this interaction promotes TP53 degradation (By similarity). Interacts with TTC5/STRAP; the interaction may result in increased mitochondrial-dependent apoptosis (By similarity). Interacts with NQO1; this interaction is NADH-dependent, stabilizes TP53 in response to oxidative stress and protects it from ubiquitin-independent degradation by the 20S proteasome (By similarity). Interacts with DAZAP2 at TP53 target gene promoters; the interaction is triggered by DNA damage and leads to modulation of the expression of a subset of TP53 target genes, reducing DNA damage-induced cell death by limiting the expression of cell death-mediating TP53 target genes (By similarity). Interacts (via N-terminus) with ZNF768 (via zinc-finger domains); interaction might be facilitated by TP53 oligomerization state (By similarity). Forms a ternary complex with ALDOB and G6PD; this interaction is direct. ALDOB stabilizes the complex inhibiting G6PD activity and keeping oxidative pentose phosphate metabolism in check. Interacts with MORN3; the interactions mediate post-transcriptional modifications of TP53 by MDM2 and SIRT1 (By similarity). Interacts with HSPA9/MOT-2; the interaction promotes the degradation of TP53 (By similarity). Interacts with FBXO22; this interaction promotes TP53 proteasomal degradation (By similarity).</text>
</comment>
<comment type="subcellular location">
    <subcellularLocation>
        <location evidence="3">Cytoplasm</location>
    </subcellularLocation>
    <subcellularLocation>
        <location evidence="3">Nucleus</location>
    </subcellularLocation>
    <subcellularLocation>
        <location evidence="3">Nucleus</location>
        <location evidence="3">PML body</location>
    </subcellularLocation>
    <subcellularLocation>
        <location evidence="3">Endoplasmic reticulum</location>
    </subcellularLocation>
    <subcellularLocation>
        <location evidence="3">Mitochondrion matrix</location>
    </subcellularLocation>
    <subcellularLocation>
        <location evidence="3">Cytoplasm</location>
        <location evidence="3">Cytoskeleton</location>
        <location evidence="3">Microtubule organizing center</location>
        <location evidence="3">Centrosome</location>
    </subcellularLocation>
    <text evidence="3">Interaction with BANP promotes nuclear localization. Recruited into PML bodies together with CHEK2. Translocates to mitochondria upon oxidative stress. Translocates to mitochondria in response to mitomycin C treatment (By similarity). Competitive inhibition of TP53 interaction with HSPA9/MOT-2 by UBXN2A results in increased protein abundance and subsequent translocation of TP53 to the nucleus (By similarity).</text>
</comment>
<comment type="domain">
    <text evidence="3">The N-terminal and C-terminal disordered regions undergo liquid-liquid phase separation (LLPS) following homotetramerization and activation. Post-translational modifications, such as phosphorylation or lactylation affect the ability to undergo LLPS.</text>
</comment>
<comment type="domain">
    <text evidence="3">The nuclear export signal acts as a transcriptional repression domain. The TADI and TADII motifs (residues 17 to 25 and 48 to 56) correspond both to 9aaTAD motifs which are transactivation domains present in a large number of yeast and animal transcription factors.</text>
</comment>
<comment type="PTM">
    <text evidence="1 3">Phosphorylation on Ser residues mediates transcriptional activation. Phosphorylation at Ser-9 by HIPK4 increases repression activity on BIRC5 promoter (By similarity). Phosphorylated on Thr-18 by VRK1, which may prevent the interaction with MDM2. Phosphorylated on Ser-20 by CHEK2 in response to DNA damage, which prevents ubiquitination by MDM2. Phosphorylated on Ser-20 by PLK3 in response to reactive oxygen species (ROS), promoting p53/TP53-mediated apoptosis. Probably phosphorylated on by CDK7 in a CAK complex in response to DNA damage. Phosphorylated by HIPK1. Phosphorylated on Ser-390 following UV but not gamma irradiation. Stabilized by CDK5-mediated phosphorylation in response to genotoxic and oxidative stresses at Ser-15, leading to accumulation of p53/TP53, particularly in the nucleus, thus inducing the transactivation of p53/TP53 target genes. Phosphorylated at Ser-313 and Ser-390 by CDK2 in response to DNA-damage (By similarity). Phosphorylation at Ser-15 is required for interaction with DDX3X and gamma-tubulin (By similarity). Phosphorylation at Ser-390 regulates its ability to undergo liquid-liquid phase separation by increasing fluidity of TP53/p53 condensates (By similarity).</text>
</comment>
<comment type="PTM">
    <text evidence="3">Monomethylated at Lys-370 by SETD7, leading to stabilization and increased transcriptional activation. Monomethylated at Lys-368 by SMYD2, leading to decreased DNA-binding activity and subsequent transcriptional regulation activity. Lys-370 monomethylation prevents interaction with SMYD2 and subsequent monomethylation at Lys-368. Dimethylated at Lys-371 by EHMT1 and EHMT2. Monomethylated at Lys-380 by KMT5A, promoting interaction with L3MBTL1 and leading to repress transcriptional activity. Demethylation of dimethylated Lys-368 by KDM1A prevents interaction with TP53BP1 and represses TP53-mediated transcriptional activation (By similarity). Monomethylated at Arg-331 and dimethylated at Arg-333 and Arg-335 by PRMT5; methylation is increased after DNA damage and might possibly affect TP53 target gene specificity (By similarity).</text>
</comment>
<comment type="PTM">
    <text evidence="1">Sumoylated with SUMO1. Sumoylated at Lys-384 by UBC9 (By similarity).</text>
</comment>
<comment type="PTM">
    <text evidence="2 3">Ubiquitinated by MDM2 and SYVN1, which leads to proteasomal degradation. Ubiquitinated by RFWD3, which works in cooperation with MDM2 and may catalyze the formation of short polyubiquitin chains on p53/TP53 that are not targeted to the proteasome. Ubiquitinated by MKRN1, which leads to proteasomal degradation. Deubiquitinated by USP10, leading to stabilize it. Ubiquitinated by TRIM24, RFFL, RNF34 and RNF125, which leads to proteasomal degradation. Ubiquitination by TOPORS induces degradation. Deubiquitination by USP7, leading to stabilize it. Ubiquitinated by COP1, which leads to proteasomal degradation (By similarity). Ubiquitination and subsequent proteasomal degradation is negatively regulated by CCAR2 (By similarity). Polyubiquitinated by C10orf90/FATS, polyubiquitination is 'Lys-48'-linkage independent and non-proteolytic, leading to TP53 stabilization (By similarity). Polyubiquitinated by MUL1 at Lys-24 which leads to proteasomal degradation (By similarity). Deubiquitinated by USP3, leading to stabilization (By similarity). Ubiquitinated by MSL2, promoting its cytoplasmic localization (By similarity). Also ubiquitinated by the SCF(FBXO22)-KDMA4A complex; leading to proteasomal degradation (By similarity).</text>
</comment>
<comment type="PTM">
    <text evidence="3">Acetylation of Lys-380 by CREBBP enhances transcriptional activity. Acetylation of Lys-380 by EP300. Deacetylation of Lys-380 by SIRT1 impairs its ability to induce proapoptotic program and modulate cell senescence. Deacetylation by SIRT2 impairs its ability to induce transcription activation in a AKT-dependent manner. Acetylation at Lys-379 increases stability. Deacetylation at Lys-379 by SIRT6 decreases its stability, thereby regulating cell senescence. Acetylated at Lys-118 by KAT5, KAT6A and KAT8; regulating its ability to induce proapoptotic program.</text>
</comment>
<comment type="PTM">
    <text evidence="3">Lactylation by AARS1 prevents ability to undergo liquid-liquid phase separation (LLPS), thereby inhibiting transcription factor activity.</text>
</comment>
<comment type="disease">
    <text>p53 is found in increased amounts in a wide variety of transformed cells. p53 is frequently mutated or inactivated in many types of cancer.</text>
</comment>
<comment type="similarity">
    <text evidence="6">Belongs to the p53 family.</text>
</comment>
<protein>
    <recommendedName>
        <fullName>Cellular tumor antigen p53</fullName>
    </recommendedName>
    <alternativeName>
        <fullName>Tumor suppressor p53</fullName>
    </alternativeName>
</protein>
<reference key="1">
    <citation type="journal article" date="1988" name="Nucleic Acids Res.">
        <title>Nucleotide sequence of a cDNA encoding the rat p53 nuclear oncoprotein.</title>
        <authorList>
            <person name="Soussi T."/>
        </authorList>
    </citation>
    <scope>NUCLEOTIDE SEQUENCE [MRNA]</scope>
</reference>
<reference key="2">
    <citation type="journal article" date="1993" name="Nucleic Acids Res.">
        <title>Structure of the rat p53 tumor suppressor gene.</title>
        <authorList>
            <person name="Hulla J.E."/>
            <person name="Schneider R.P."/>
        </authorList>
    </citation>
    <scope>NUCLEOTIDE SEQUENCE [GENOMIC DNA]</scope>
</reference>
<reference key="3">
    <citation type="journal article" date="1997" name="J. Biol. Chem.">
        <title>Glucose catabolism in cancer cells. The type II hexokinase promoter contains functionally active response elements for the tumor suppressor p53.</title>
        <authorList>
            <person name="Mathupala S.P."/>
            <person name="Heese C."/>
            <person name="Pedersen P.L."/>
        </authorList>
    </citation>
    <scope>NUCLEOTIDE SEQUENCE [MRNA]</scope>
    <source>
        <strain>Sprague-Dawley</strain>
    </source>
</reference>
<reference key="4">
    <citation type="journal article" date="2004" name="Genome Res.">
        <title>The status, quality, and expansion of the NIH full-length cDNA project: the Mammalian Gene Collection (MGC).</title>
        <authorList>
            <consortium name="The MGC Project Team"/>
        </authorList>
    </citation>
    <scope>NUCLEOTIDE SEQUENCE [LARGE SCALE MRNA]</scope>
    <source>
        <tissue>Heart</tissue>
        <tissue>Thymus</tissue>
    </source>
</reference>
<reference key="5">
    <citation type="journal article" date="1996" name="J. Biol. Chem.">
        <title>Heat shock protein 84 forms a complex with mutant p53 protein predominantly within a cytoplasmic compartment of the cell.</title>
        <authorList>
            <person name="Sepehrnia B."/>
            <person name="Paz I.B."/>
            <person name="Dasgupta G."/>
            <person name="Momand J."/>
        </authorList>
    </citation>
    <scope>INTERACTION WITH HSP90AB1</scope>
    <source>
        <tissue>Embryo</tissue>
    </source>
</reference>
<reference key="6">
    <citation type="journal article" date="2012" name="Cell">
        <title>p53 opens the mitochondrial permeability transition pore to trigger necrosis.</title>
        <authorList>
            <person name="Vaseva A.V."/>
            <person name="Marchenko N.D."/>
            <person name="Ji K."/>
            <person name="Tsirka S.E."/>
            <person name="Holzmann S."/>
            <person name="Moll U.M."/>
        </authorList>
    </citation>
    <scope>SUBCELLULAR LOCATION</scope>
</reference>
<organism>
    <name type="scientific">Rattus norvegicus</name>
    <name type="common">Rat</name>
    <dbReference type="NCBI Taxonomy" id="10116"/>
    <lineage>
        <taxon>Eukaryota</taxon>
        <taxon>Metazoa</taxon>
        <taxon>Chordata</taxon>
        <taxon>Craniata</taxon>
        <taxon>Vertebrata</taxon>
        <taxon>Euteleostomi</taxon>
        <taxon>Mammalia</taxon>
        <taxon>Eutheria</taxon>
        <taxon>Euarchontoglires</taxon>
        <taxon>Glires</taxon>
        <taxon>Rodentia</taxon>
        <taxon>Myomorpha</taxon>
        <taxon>Muroidea</taxon>
        <taxon>Muridae</taxon>
        <taxon>Murinae</taxon>
        <taxon>Rattus</taxon>
    </lineage>
</organism>
<gene>
    <name type="primary">Tp53</name>
    <name type="synonym">P53</name>
</gene>
<proteinExistence type="evidence at protein level"/>
<keyword id="KW-0007">Acetylation</keyword>
<keyword id="KW-0010">Activator</keyword>
<keyword id="KW-0053">Apoptosis</keyword>
<keyword id="KW-0090">Biological rhythms</keyword>
<keyword id="KW-0131">Cell cycle</keyword>
<keyword id="KW-0963">Cytoplasm</keyword>
<keyword id="KW-0206">Cytoskeleton</keyword>
<keyword id="KW-0238">DNA-binding</keyword>
<keyword id="KW-0256">Endoplasmic reticulum</keyword>
<keyword id="KW-1017">Isopeptide bond</keyword>
<keyword id="KW-0479">Metal-binding</keyword>
<keyword id="KW-0488">Methylation</keyword>
<keyword id="KW-0496">Mitochondrion</keyword>
<keyword id="KW-1210">Necrosis</keyword>
<keyword id="KW-0539">Nucleus</keyword>
<keyword id="KW-0597">Phosphoprotein</keyword>
<keyword id="KW-1185">Reference proteome</keyword>
<keyword id="KW-0678">Repressor</keyword>
<keyword id="KW-0804">Transcription</keyword>
<keyword id="KW-0805">Transcription regulation</keyword>
<keyword id="KW-0043">Tumor suppressor</keyword>
<keyword id="KW-0832">Ubl conjugation</keyword>
<keyword id="KW-0862">Zinc</keyword>